<feature type="chain" id="PRO_0000381895" description="Polyribonucleotide nucleotidyltransferase">
    <location>
        <begin position="1"/>
        <end position="711"/>
    </location>
</feature>
<feature type="domain" description="KH" evidence="1">
    <location>
        <begin position="553"/>
        <end position="612"/>
    </location>
</feature>
<feature type="domain" description="S1 motif" evidence="1">
    <location>
        <begin position="622"/>
        <end position="690"/>
    </location>
</feature>
<feature type="region of interest" description="Disordered" evidence="2">
    <location>
        <begin position="689"/>
        <end position="711"/>
    </location>
</feature>
<feature type="compositionally biased region" description="Low complexity" evidence="2">
    <location>
        <begin position="694"/>
        <end position="711"/>
    </location>
</feature>
<feature type="binding site" evidence="1">
    <location>
        <position position="486"/>
    </location>
    <ligand>
        <name>Mg(2+)</name>
        <dbReference type="ChEBI" id="CHEBI:18420"/>
    </ligand>
</feature>
<feature type="binding site" evidence="1">
    <location>
        <position position="492"/>
    </location>
    <ligand>
        <name>Mg(2+)</name>
        <dbReference type="ChEBI" id="CHEBI:18420"/>
    </ligand>
</feature>
<organism>
    <name type="scientific">Escherichia fergusonii (strain ATCC 35469 / DSM 13698 / CCUG 18766 / IAM 14443 / JCM 21226 / LMG 7866 / NBRC 102419 / NCTC 12128 / CDC 0568-73)</name>
    <dbReference type="NCBI Taxonomy" id="585054"/>
    <lineage>
        <taxon>Bacteria</taxon>
        <taxon>Pseudomonadati</taxon>
        <taxon>Pseudomonadota</taxon>
        <taxon>Gammaproteobacteria</taxon>
        <taxon>Enterobacterales</taxon>
        <taxon>Enterobacteriaceae</taxon>
        <taxon>Escherichia</taxon>
    </lineage>
</organism>
<reference key="1">
    <citation type="journal article" date="2009" name="PLoS Genet.">
        <title>Organised genome dynamics in the Escherichia coli species results in highly diverse adaptive paths.</title>
        <authorList>
            <person name="Touchon M."/>
            <person name="Hoede C."/>
            <person name="Tenaillon O."/>
            <person name="Barbe V."/>
            <person name="Baeriswyl S."/>
            <person name="Bidet P."/>
            <person name="Bingen E."/>
            <person name="Bonacorsi S."/>
            <person name="Bouchier C."/>
            <person name="Bouvet O."/>
            <person name="Calteau A."/>
            <person name="Chiapello H."/>
            <person name="Clermont O."/>
            <person name="Cruveiller S."/>
            <person name="Danchin A."/>
            <person name="Diard M."/>
            <person name="Dossat C."/>
            <person name="Karoui M.E."/>
            <person name="Frapy E."/>
            <person name="Garry L."/>
            <person name="Ghigo J.M."/>
            <person name="Gilles A.M."/>
            <person name="Johnson J."/>
            <person name="Le Bouguenec C."/>
            <person name="Lescat M."/>
            <person name="Mangenot S."/>
            <person name="Martinez-Jehanne V."/>
            <person name="Matic I."/>
            <person name="Nassif X."/>
            <person name="Oztas S."/>
            <person name="Petit M.A."/>
            <person name="Pichon C."/>
            <person name="Rouy Z."/>
            <person name="Ruf C.S."/>
            <person name="Schneider D."/>
            <person name="Tourret J."/>
            <person name="Vacherie B."/>
            <person name="Vallenet D."/>
            <person name="Medigue C."/>
            <person name="Rocha E.P.C."/>
            <person name="Denamur E."/>
        </authorList>
    </citation>
    <scope>NUCLEOTIDE SEQUENCE [LARGE SCALE GENOMIC DNA]</scope>
    <source>
        <strain>ATCC 35469 / DSM 13698 / BCRC 15582 / CCUG 18766 / IAM 14443 / JCM 21226 / LMG 7866 / NBRC 102419 / NCTC 12128 / CDC 0568-73</strain>
    </source>
</reference>
<protein>
    <recommendedName>
        <fullName evidence="1">Polyribonucleotide nucleotidyltransferase</fullName>
        <ecNumber evidence="1">2.7.7.8</ecNumber>
    </recommendedName>
    <alternativeName>
        <fullName evidence="1">Polynucleotide phosphorylase</fullName>
        <shortName evidence="1">PNPase</shortName>
    </alternativeName>
</protein>
<sequence>MLNPIVRKFQYGQHTVTLETGMMARQATAAVMVSMDDTAVFVTVVGQKKAKPGQDFFPLTVNYQERTYAAGRIPGSFFRREGRPSEGETLIARLIDRPIRPLFPEGFVNEVQVIATVVSVNPQVNPDIVAMIGASAALSLSGIPFNGPIGAARVGYINDQYVLNPTQDELKESKLDLVVAGTEAAVLMVESEAELLSEDQMLGAVVFGHEQQQVVIQNINELVKEAGKPRWDWQPEPVNEALNARVAALAEARLSDAYRITDKQERYAQVDVIKSETIATLLAEDETLDENELGEILHAIEKNVVRSRVLAGEPRIDGREKDMIRGLDVRTGVLPRTHGSALFTRGETQALVTATLGTARDAQVLDELMGERTDTFLFHYNFPPYSVGETGMVGSPKRREIGHGRLAKRGVLAVMPDMDKFPYTVRVVSEITESNGSSSMASVCGASLALMDAGVPIKAAVAGIAMGLVKEGDNYVVLSDILGDEDHLGDMDFKVAGSRDGISALQMDIKIEGITKEIMQVALNQAKGARLHILGVMEQAINAPRGDISEFAPRIHTIKINPDKIKDVIGKGGSVIRALTEETGTTIEIEDDGTVKIAATDGEKAKNAIRRIEEITAEIEVGRVYNGKVTRIVDFGAFVAIGGGKEGLVHISQIADKRVEKVTDYLQMGQEVPVKVLEVDRQGRIRLSIKEATEQSQPAAAPEAPAAEQGE</sequence>
<comment type="function">
    <text evidence="1">Involved in mRNA degradation. Catalyzes the phosphorolysis of single-stranded polyribonucleotides processively in the 3'- to 5'-direction.</text>
</comment>
<comment type="catalytic activity">
    <reaction evidence="1">
        <text>RNA(n+1) + phosphate = RNA(n) + a ribonucleoside 5'-diphosphate</text>
        <dbReference type="Rhea" id="RHEA:22096"/>
        <dbReference type="Rhea" id="RHEA-COMP:14527"/>
        <dbReference type="Rhea" id="RHEA-COMP:17342"/>
        <dbReference type="ChEBI" id="CHEBI:43474"/>
        <dbReference type="ChEBI" id="CHEBI:57930"/>
        <dbReference type="ChEBI" id="CHEBI:140395"/>
        <dbReference type="EC" id="2.7.7.8"/>
    </reaction>
</comment>
<comment type="cofactor">
    <cofactor evidence="1">
        <name>Mg(2+)</name>
        <dbReference type="ChEBI" id="CHEBI:18420"/>
    </cofactor>
</comment>
<comment type="subunit">
    <text evidence="1">Component of the RNA degradosome, which is a multiprotein complex involved in RNA processing and mRNA degradation.</text>
</comment>
<comment type="subcellular location">
    <subcellularLocation>
        <location evidence="1">Cytoplasm</location>
    </subcellularLocation>
</comment>
<comment type="similarity">
    <text evidence="1">Belongs to the polyribonucleotide nucleotidyltransferase family.</text>
</comment>
<comment type="sequence caution" evidence="3">
    <conflict type="erroneous initiation">
        <sequence resource="EMBL-CDS" id="CAQ90636"/>
    </conflict>
</comment>
<gene>
    <name evidence="1" type="primary">pnp</name>
    <name type="ordered locus">EFER_3143</name>
</gene>
<keyword id="KW-0963">Cytoplasm</keyword>
<keyword id="KW-0460">Magnesium</keyword>
<keyword id="KW-0479">Metal-binding</keyword>
<keyword id="KW-0548">Nucleotidyltransferase</keyword>
<keyword id="KW-0694">RNA-binding</keyword>
<keyword id="KW-0808">Transferase</keyword>
<proteinExistence type="inferred from homology"/>
<accession>B7LR33</accession>
<name>PNP_ESCF3</name>
<evidence type="ECO:0000255" key="1">
    <source>
        <dbReference type="HAMAP-Rule" id="MF_01595"/>
    </source>
</evidence>
<evidence type="ECO:0000256" key="2">
    <source>
        <dbReference type="SAM" id="MobiDB-lite"/>
    </source>
</evidence>
<evidence type="ECO:0000305" key="3"/>
<dbReference type="EC" id="2.7.7.8" evidence="1"/>
<dbReference type="EMBL" id="CU928158">
    <property type="protein sequence ID" value="CAQ90636.1"/>
    <property type="status" value="ALT_INIT"/>
    <property type="molecule type" value="Genomic_DNA"/>
</dbReference>
<dbReference type="RefSeq" id="WP_001296445.1">
    <property type="nucleotide sequence ID" value="NC_011740.1"/>
</dbReference>
<dbReference type="SMR" id="B7LR33"/>
<dbReference type="GeneID" id="75060241"/>
<dbReference type="KEGG" id="efe:EFER_3143"/>
<dbReference type="HOGENOM" id="CLU_004217_2_2_6"/>
<dbReference type="OrthoDB" id="9804305at2"/>
<dbReference type="Proteomes" id="UP000000745">
    <property type="component" value="Chromosome"/>
</dbReference>
<dbReference type="GO" id="GO:0005829">
    <property type="term" value="C:cytosol"/>
    <property type="evidence" value="ECO:0007669"/>
    <property type="project" value="TreeGrafter"/>
</dbReference>
<dbReference type="GO" id="GO:0000175">
    <property type="term" value="F:3'-5'-RNA exonuclease activity"/>
    <property type="evidence" value="ECO:0007669"/>
    <property type="project" value="TreeGrafter"/>
</dbReference>
<dbReference type="GO" id="GO:0000287">
    <property type="term" value="F:magnesium ion binding"/>
    <property type="evidence" value="ECO:0007669"/>
    <property type="project" value="UniProtKB-UniRule"/>
</dbReference>
<dbReference type="GO" id="GO:0004654">
    <property type="term" value="F:polyribonucleotide nucleotidyltransferase activity"/>
    <property type="evidence" value="ECO:0007669"/>
    <property type="project" value="UniProtKB-UniRule"/>
</dbReference>
<dbReference type="GO" id="GO:0003723">
    <property type="term" value="F:RNA binding"/>
    <property type="evidence" value="ECO:0007669"/>
    <property type="project" value="UniProtKB-UniRule"/>
</dbReference>
<dbReference type="GO" id="GO:0006402">
    <property type="term" value="P:mRNA catabolic process"/>
    <property type="evidence" value="ECO:0007669"/>
    <property type="project" value="UniProtKB-UniRule"/>
</dbReference>
<dbReference type="GO" id="GO:0006396">
    <property type="term" value="P:RNA processing"/>
    <property type="evidence" value="ECO:0007669"/>
    <property type="project" value="InterPro"/>
</dbReference>
<dbReference type="CDD" id="cd02393">
    <property type="entry name" value="KH-I_PNPase"/>
    <property type="match status" value="1"/>
</dbReference>
<dbReference type="CDD" id="cd11363">
    <property type="entry name" value="RNase_PH_PNPase_1"/>
    <property type="match status" value="1"/>
</dbReference>
<dbReference type="CDD" id="cd11364">
    <property type="entry name" value="RNase_PH_PNPase_2"/>
    <property type="match status" value="1"/>
</dbReference>
<dbReference type="CDD" id="cd04472">
    <property type="entry name" value="S1_PNPase"/>
    <property type="match status" value="1"/>
</dbReference>
<dbReference type="FunFam" id="2.40.50.140:FF:000023">
    <property type="entry name" value="Polyribonucleotide nucleotidyltransferase"/>
    <property type="match status" value="1"/>
</dbReference>
<dbReference type="FunFam" id="3.30.1370.10:FF:000001">
    <property type="entry name" value="Polyribonucleotide nucleotidyltransferase"/>
    <property type="match status" value="1"/>
</dbReference>
<dbReference type="FunFam" id="3.30.230.70:FF:000001">
    <property type="entry name" value="Polyribonucleotide nucleotidyltransferase"/>
    <property type="match status" value="1"/>
</dbReference>
<dbReference type="FunFam" id="3.30.230.70:FF:000002">
    <property type="entry name" value="Polyribonucleotide nucleotidyltransferase"/>
    <property type="match status" value="1"/>
</dbReference>
<dbReference type="Gene3D" id="3.30.230.70">
    <property type="entry name" value="GHMP Kinase, N-terminal domain"/>
    <property type="match status" value="2"/>
</dbReference>
<dbReference type="Gene3D" id="3.30.1370.10">
    <property type="entry name" value="K Homology domain, type 1"/>
    <property type="match status" value="1"/>
</dbReference>
<dbReference type="Gene3D" id="2.40.50.140">
    <property type="entry name" value="Nucleic acid-binding proteins"/>
    <property type="match status" value="1"/>
</dbReference>
<dbReference type="HAMAP" id="MF_01595">
    <property type="entry name" value="PNPase"/>
    <property type="match status" value="1"/>
</dbReference>
<dbReference type="InterPro" id="IPR001247">
    <property type="entry name" value="ExoRNase_PH_dom1"/>
</dbReference>
<dbReference type="InterPro" id="IPR015847">
    <property type="entry name" value="ExoRNase_PH_dom2"/>
</dbReference>
<dbReference type="InterPro" id="IPR036345">
    <property type="entry name" value="ExoRNase_PH_dom2_sf"/>
</dbReference>
<dbReference type="InterPro" id="IPR004087">
    <property type="entry name" value="KH_dom"/>
</dbReference>
<dbReference type="InterPro" id="IPR004088">
    <property type="entry name" value="KH_dom_type_1"/>
</dbReference>
<dbReference type="InterPro" id="IPR036612">
    <property type="entry name" value="KH_dom_type_1_sf"/>
</dbReference>
<dbReference type="InterPro" id="IPR012340">
    <property type="entry name" value="NA-bd_OB-fold"/>
</dbReference>
<dbReference type="InterPro" id="IPR012162">
    <property type="entry name" value="PNPase"/>
</dbReference>
<dbReference type="InterPro" id="IPR027408">
    <property type="entry name" value="PNPase/RNase_PH_dom_sf"/>
</dbReference>
<dbReference type="InterPro" id="IPR015848">
    <property type="entry name" value="PNPase_PH_RNA-bd_bac/org-type"/>
</dbReference>
<dbReference type="InterPro" id="IPR036456">
    <property type="entry name" value="PNPase_PH_RNA-bd_sf"/>
</dbReference>
<dbReference type="InterPro" id="IPR020568">
    <property type="entry name" value="Ribosomal_Su5_D2-typ_SF"/>
</dbReference>
<dbReference type="InterPro" id="IPR003029">
    <property type="entry name" value="S1_domain"/>
</dbReference>
<dbReference type="NCBIfam" id="TIGR03591">
    <property type="entry name" value="polynuc_phos"/>
    <property type="match status" value="1"/>
</dbReference>
<dbReference type="NCBIfam" id="NF008805">
    <property type="entry name" value="PRK11824.1"/>
    <property type="match status" value="1"/>
</dbReference>
<dbReference type="PANTHER" id="PTHR11252">
    <property type="entry name" value="POLYRIBONUCLEOTIDE NUCLEOTIDYLTRANSFERASE"/>
    <property type="match status" value="1"/>
</dbReference>
<dbReference type="PANTHER" id="PTHR11252:SF0">
    <property type="entry name" value="POLYRIBONUCLEOTIDE NUCLEOTIDYLTRANSFERASE 1, MITOCHONDRIAL"/>
    <property type="match status" value="1"/>
</dbReference>
<dbReference type="Pfam" id="PF00013">
    <property type="entry name" value="KH_1"/>
    <property type="match status" value="1"/>
</dbReference>
<dbReference type="Pfam" id="PF03726">
    <property type="entry name" value="PNPase"/>
    <property type="match status" value="1"/>
</dbReference>
<dbReference type="Pfam" id="PF01138">
    <property type="entry name" value="RNase_PH"/>
    <property type="match status" value="2"/>
</dbReference>
<dbReference type="Pfam" id="PF03725">
    <property type="entry name" value="RNase_PH_C"/>
    <property type="match status" value="2"/>
</dbReference>
<dbReference type="Pfam" id="PF00575">
    <property type="entry name" value="S1"/>
    <property type="match status" value="1"/>
</dbReference>
<dbReference type="PIRSF" id="PIRSF005499">
    <property type="entry name" value="PNPase"/>
    <property type="match status" value="1"/>
</dbReference>
<dbReference type="SMART" id="SM00322">
    <property type="entry name" value="KH"/>
    <property type="match status" value="1"/>
</dbReference>
<dbReference type="SMART" id="SM00316">
    <property type="entry name" value="S1"/>
    <property type="match status" value="1"/>
</dbReference>
<dbReference type="SUPFAM" id="SSF54791">
    <property type="entry name" value="Eukaryotic type KH-domain (KH-domain type I)"/>
    <property type="match status" value="1"/>
</dbReference>
<dbReference type="SUPFAM" id="SSF50249">
    <property type="entry name" value="Nucleic acid-binding proteins"/>
    <property type="match status" value="1"/>
</dbReference>
<dbReference type="SUPFAM" id="SSF46915">
    <property type="entry name" value="Polynucleotide phosphorylase/guanosine pentaphosphate synthase (PNPase/GPSI), domain 3"/>
    <property type="match status" value="1"/>
</dbReference>
<dbReference type="SUPFAM" id="SSF55666">
    <property type="entry name" value="Ribonuclease PH domain 2-like"/>
    <property type="match status" value="2"/>
</dbReference>
<dbReference type="SUPFAM" id="SSF54211">
    <property type="entry name" value="Ribosomal protein S5 domain 2-like"/>
    <property type="match status" value="2"/>
</dbReference>
<dbReference type="PROSITE" id="PS50084">
    <property type="entry name" value="KH_TYPE_1"/>
    <property type="match status" value="1"/>
</dbReference>
<dbReference type="PROSITE" id="PS50126">
    <property type="entry name" value="S1"/>
    <property type="match status" value="1"/>
</dbReference>